<accession>P0C085</accession>
<accession>Q9EV28</accession>
<proteinExistence type="inferred from homology"/>
<name>LKA7B_MANHA</name>
<evidence type="ECO:0000250" key="1"/>
<evidence type="ECO:0000255" key="2"/>
<evidence type="ECO:0000305" key="3"/>
<sequence length="953" mass="102218">MGNKLTNISTNLKSSWLTAKSGLNRTGQSLAKAGQSLKTGAKKIILYIPKDYQYDTDKGNGLQDLVKAAEELGIEVQKEESNDIAKAQTSLGTIHNVLGLTERGIVLSAPQLDKLLQKTKVGQAIGSTENITKGFSNAKTVLSGIQSILGSVLAGMDLDEALQNNSNELTLAKAGLELTNSLIENIANSVKTLDAFGDQINQLGSKLQNVKGLSSLGEKLKGLSGFDKTSLGLDIVSGLLSGATAALVLADKNASTSRKVGAGFELANQVVGNITKAVSSYILAQRVAAGLSSTGPVAALIASTVSLAISPLSFAGIADKFNHAKSLESYAERFKKLGYDGDNLLAEYQRGTGTIDASVTAINTALAAIAGGVSAAAAGSVVASPIALLVSGITGVISTILQYSKQAMFEHVANKIHNKIVEWEKNNPGKNYFENGYDARYLANLQDNMKFLLNLNKELQAERVIAITQQQWDNNIGDLAGISRLGEKVLSGKAYVDAFEEGQHLKADKLVQLDSAKGIIDVSNTGEAKTQHILFRTPLLTPGTEKRERVQTGKYEYITKLHINRVDSWKITDGAASSTFDLTNVVQRIGIELDNAGNVTKTKETKIIAKLGEGDDNVFVGSGTTEIDGGEGYDRVHYSRGNYGALTIDATKETEQGSYTVNRFVESGKALHEVTSTHTALVGNREEKIEYRHSNNQHHAGYYTKDTLKAVEEIIGTSHNDIFKGSKFNDAFNGGDGVDTIDGNDGNDRLFGGKGDDIIDGGNGDDFIDGGKGNDLLHGGKGDDIFVHRQGDGNDSITESEGNDKLSFSDSNLKDLTFEKVNHHLVITNTKQEKVTIQNWFREAEFAKTIQNYVATRDDKIEEIIGQNGERITSKQVDELIEKGNGKIAQSELTKVVDNYQLLKYSRDASNSLDKLISSASAFTSSNDSRNVLASPTSMLDPSLSSIQFARAA</sequence>
<comment type="function">
    <text evidence="1">Pasteurella leukotoxins are exotoxins that attack host leukocytes and especially polymorphonuclear cells, by causing cell rupture. The leukotoxin binds to the host LFA-1 integrin and induces a signaling cascade leading to many biological effects, including tyrosine phosphorylation of the CD18 tail, elevation of the intracellular Ca(2+) and lysis of the host cell (By similarity). This leukotoxin is a major contributor to the pathogenesis of lung injury in ovine pneumonic pasteurellosis. It also has weak hemolytic activity.</text>
</comment>
<comment type="subcellular location">
    <subcellularLocation>
        <location evidence="1">Secreted</location>
    </subcellularLocation>
    <subcellularLocation>
        <location evidence="1">Host cell membrane</location>
        <topology evidence="1">Multi-pass membrane protein</topology>
    </subcellularLocation>
</comment>
<comment type="domain">
    <text evidence="1">The transmembrane domains are believed to be involved in pore formation in target cells.</text>
</comment>
<comment type="domain">
    <text evidence="1">The Gly-rich region is probably involved in calcium binding, which is required for target cell-binding and cytolytic activity.</text>
</comment>
<comment type="domain">
    <text evidence="1">The C-terminal domain contains an export signal that is recognized by the ABC transporter complex LktBD.</text>
</comment>
<comment type="PTM">
    <text evidence="1">Acylated by LktC. The toxin only becomes active when modified (By similarity).</text>
</comment>
<comment type="miscellaneous">
    <text>The lktCABD operon has a complex mosaic structure that has been derived by extensive inter- and intraspecies horizontal DNA transfer and intragenic recombination events.</text>
</comment>
<comment type="similarity">
    <text evidence="3">Belongs to the RTX prokaryotic toxin (TC 1.C.11) family.</text>
</comment>
<keyword id="KW-0106">Calcium</keyword>
<keyword id="KW-0204">Cytolysis</keyword>
<keyword id="KW-0354">Hemolysis</keyword>
<keyword id="KW-1032">Host cell membrane</keyword>
<keyword id="KW-1043">Host membrane</keyword>
<keyword id="KW-0449">Lipoprotein</keyword>
<keyword id="KW-0472">Membrane</keyword>
<keyword id="KW-0677">Repeat</keyword>
<keyword id="KW-0964">Secreted</keyword>
<keyword id="KW-0800">Toxin</keyword>
<keyword id="KW-0812">Transmembrane</keyword>
<keyword id="KW-1133">Transmembrane helix</keyword>
<keyword id="KW-0843">Virulence</keyword>
<dbReference type="EMBL" id="AF414141">
    <property type="protein sequence ID" value="AAL13281.1"/>
    <property type="molecule type" value="Genomic_DNA"/>
</dbReference>
<dbReference type="RefSeq" id="WP_061888577.1">
    <property type="nucleotide sequence ID" value="NZ_CP017484.1"/>
</dbReference>
<dbReference type="SMR" id="P0C085"/>
<dbReference type="PATRIC" id="fig|75985.47.peg.433"/>
<dbReference type="GO" id="GO:0005576">
    <property type="term" value="C:extracellular region"/>
    <property type="evidence" value="ECO:0007669"/>
    <property type="project" value="UniProtKB-SubCell"/>
</dbReference>
<dbReference type="GO" id="GO:0020002">
    <property type="term" value="C:host cell plasma membrane"/>
    <property type="evidence" value="ECO:0007669"/>
    <property type="project" value="UniProtKB-SubCell"/>
</dbReference>
<dbReference type="GO" id="GO:0016020">
    <property type="term" value="C:membrane"/>
    <property type="evidence" value="ECO:0007669"/>
    <property type="project" value="UniProtKB-KW"/>
</dbReference>
<dbReference type="GO" id="GO:0005509">
    <property type="term" value="F:calcium ion binding"/>
    <property type="evidence" value="ECO:0007669"/>
    <property type="project" value="InterPro"/>
</dbReference>
<dbReference type="GO" id="GO:0015267">
    <property type="term" value="F:channel activity"/>
    <property type="evidence" value="ECO:0007669"/>
    <property type="project" value="InterPro"/>
</dbReference>
<dbReference type="GO" id="GO:0090729">
    <property type="term" value="F:toxin activity"/>
    <property type="evidence" value="ECO:0007669"/>
    <property type="project" value="UniProtKB-KW"/>
</dbReference>
<dbReference type="GO" id="GO:0031640">
    <property type="term" value="P:killing of cells of another organism"/>
    <property type="evidence" value="ECO:0007669"/>
    <property type="project" value="UniProtKB-KW"/>
</dbReference>
<dbReference type="FunFam" id="2.150.10.10:FF:000002">
    <property type="entry name" value="Leukotoxin"/>
    <property type="match status" value="1"/>
</dbReference>
<dbReference type="Gene3D" id="2.150.10.10">
    <property type="entry name" value="Serralysin-like metalloprotease, C-terminal"/>
    <property type="match status" value="1"/>
</dbReference>
<dbReference type="InterPro" id="IPR018511">
    <property type="entry name" value="Hemolysin-typ_Ca-bd_CS"/>
</dbReference>
<dbReference type="InterPro" id="IPR001343">
    <property type="entry name" value="Hemolysn_Ca-bd"/>
</dbReference>
<dbReference type="InterPro" id="IPR013550">
    <property type="entry name" value="RTX_C"/>
</dbReference>
<dbReference type="InterPro" id="IPR018504">
    <property type="entry name" value="RTX_pore_form"/>
</dbReference>
<dbReference type="InterPro" id="IPR050557">
    <property type="entry name" value="RTX_toxin/Mannuronan_C5-epim"/>
</dbReference>
<dbReference type="InterPro" id="IPR003995">
    <property type="entry name" value="RTX_toxin_determinant-A"/>
</dbReference>
<dbReference type="InterPro" id="IPR011049">
    <property type="entry name" value="Serralysin-like_metalloprot_C"/>
</dbReference>
<dbReference type="NCBIfam" id="NF033943">
    <property type="entry name" value="RTX_toxin"/>
    <property type="match status" value="1"/>
</dbReference>
<dbReference type="PANTHER" id="PTHR38340">
    <property type="entry name" value="S-LAYER PROTEIN"/>
    <property type="match status" value="1"/>
</dbReference>
<dbReference type="PANTHER" id="PTHR38340:SF1">
    <property type="entry name" value="S-LAYER PROTEIN"/>
    <property type="match status" value="1"/>
</dbReference>
<dbReference type="Pfam" id="PF00353">
    <property type="entry name" value="HemolysinCabind"/>
    <property type="match status" value="2"/>
</dbReference>
<dbReference type="Pfam" id="PF02382">
    <property type="entry name" value="RTX"/>
    <property type="match status" value="1"/>
</dbReference>
<dbReference type="Pfam" id="PF08339">
    <property type="entry name" value="RTX_C"/>
    <property type="match status" value="1"/>
</dbReference>
<dbReference type="PRINTS" id="PR00313">
    <property type="entry name" value="CABNDNGRPT"/>
</dbReference>
<dbReference type="PRINTS" id="PR01488">
    <property type="entry name" value="RTXTOXINA"/>
</dbReference>
<dbReference type="SUPFAM" id="SSF51120">
    <property type="entry name" value="beta-Roll"/>
    <property type="match status" value="1"/>
</dbReference>
<dbReference type="PROSITE" id="PS00330">
    <property type="entry name" value="HEMOLYSIN_CALCIUM"/>
    <property type="match status" value="4"/>
</dbReference>
<organism>
    <name type="scientific">Mannheimia haemolytica</name>
    <name type="common">Pasteurella haemolytica</name>
    <dbReference type="NCBI Taxonomy" id="75985"/>
    <lineage>
        <taxon>Bacteria</taxon>
        <taxon>Pseudomonadati</taxon>
        <taxon>Pseudomonadota</taxon>
        <taxon>Gammaproteobacteria</taxon>
        <taxon>Pasteurellales</taxon>
        <taxon>Pasteurellaceae</taxon>
        <taxon>Mannheimia</taxon>
    </lineage>
</organism>
<gene>
    <name type="primary">lktA</name>
</gene>
<protein>
    <recommendedName>
        <fullName>Leukotoxin</fullName>
        <shortName>Lkt</shortName>
    </recommendedName>
</protein>
<feature type="chain" id="PRO_0000196228" description="Leukotoxin">
    <location>
        <begin position="1"/>
        <end position="953"/>
    </location>
</feature>
<feature type="transmembrane region" description="Helical" evidence="2">
    <location>
        <begin position="230"/>
        <end position="250"/>
    </location>
</feature>
<feature type="transmembrane region" description="Helical" evidence="2">
    <location>
        <begin position="297"/>
        <end position="317"/>
    </location>
</feature>
<feature type="transmembrane region" description="Helical" evidence="2">
    <location>
        <begin position="359"/>
        <end position="379"/>
    </location>
</feature>
<feature type="transmembrane region" description="Helical" evidence="2">
    <location>
        <begin position="381"/>
        <end position="401"/>
    </location>
</feature>
<feature type="repeat" description="Hemolysin-type calcium-binding 1">
    <location>
        <begin position="715"/>
        <end position="732"/>
    </location>
</feature>
<feature type="repeat" description="Hemolysin-type calcium-binding 2">
    <location>
        <begin position="733"/>
        <end position="750"/>
    </location>
</feature>
<feature type="repeat" description="Hemolysin-type calcium-binding 3">
    <location>
        <begin position="751"/>
        <end position="768"/>
    </location>
</feature>
<feature type="repeat" description="Hemolysin-type calcium-binding 4">
    <location>
        <begin position="769"/>
        <end position="786"/>
    </location>
</feature>
<feature type="repeat" description="Hemolysin-type calcium-binding 5">
    <location>
        <begin position="789"/>
        <end position="806"/>
    </location>
</feature>
<reference key="1">
    <citation type="journal article" date="2001" name="J. Bacteriol.">
        <title>Sequence diversity and molecular evolution of the leukotoxin (lktA) gene in bovine and ovine strains of Mannheimia (Pasteurella) haemolytica.</title>
        <authorList>
            <person name="Davies R.L."/>
            <person name="Whittam T.S."/>
            <person name="Selander R.K."/>
        </authorList>
    </citation>
    <scope>NUCLEOTIDE SEQUENCE [GENOMIC DNA]</scope>
    <source>
        <strain>Serotype A7 / PH296</strain>
    </source>
</reference>